<keyword id="KW-0028">Amino-acid biosynthesis</keyword>
<keyword id="KW-0055">Arginine biosynthesis</keyword>
<keyword id="KW-0067">ATP-binding</keyword>
<keyword id="KW-0436">Ligase</keyword>
<keyword id="KW-0460">Magnesium</keyword>
<keyword id="KW-0464">Manganese</keyword>
<keyword id="KW-0479">Metal-binding</keyword>
<keyword id="KW-0547">Nucleotide-binding</keyword>
<keyword id="KW-0665">Pyrimidine biosynthesis</keyword>
<keyword id="KW-1185">Reference proteome</keyword>
<keyword id="KW-0677">Repeat</keyword>
<organism>
    <name type="scientific">Rubrobacter xylanophilus (strain DSM 9941 / JCM 11954 / NBRC 16129 / PRD-1)</name>
    <dbReference type="NCBI Taxonomy" id="266117"/>
    <lineage>
        <taxon>Bacteria</taxon>
        <taxon>Bacillati</taxon>
        <taxon>Actinomycetota</taxon>
        <taxon>Rubrobacteria</taxon>
        <taxon>Rubrobacterales</taxon>
        <taxon>Rubrobacteraceae</taxon>
        <taxon>Rubrobacter</taxon>
    </lineage>
</organism>
<reference key="1">
    <citation type="submission" date="2006-06" db="EMBL/GenBank/DDBJ databases">
        <title>Complete sequence of Rubrobacter xylanophilus DSM 9941.</title>
        <authorList>
            <consortium name="US DOE Joint Genome Institute"/>
            <person name="Copeland A."/>
            <person name="Lucas S."/>
            <person name="Lapidus A."/>
            <person name="Barry K."/>
            <person name="Detter J.C."/>
            <person name="Glavina del Rio T."/>
            <person name="Hammon N."/>
            <person name="Israni S."/>
            <person name="Dalin E."/>
            <person name="Tice H."/>
            <person name="Pitluck S."/>
            <person name="Munk A.C."/>
            <person name="Brettin T."/>
            <person name="Bruce D."/>
            <person name="Han C."/>
            <person name="Tapia R."/>
            <person name="Gilna P."/>
            <person name="Schmutz J."/>
            <person name="Larimer F."/>
            <person name="Land M."/>
            <person name="Hauser L."/>
            <person name="Kyrpides N."/>
            <person name="Lykidis A."/>
            <person name="da Costa M.S."/>
            <person name="Rainey F.A."/>
            <person name="Empadinhas N."/>
            <person name="Jolivet E."/>
            <person name="Battista J.R."/>
            <person name="Richardson P."/>
        </authorList>
    </citation>
    <scope>NUCLEOTIDE SEQUENCE [LARGE SCALE GENOMIC DNA]</scope>
    <source>
        <strain>DSM 9941 / JCM 11954 / NBRC 16129 / PRD-1</strain>
    </source>
</reference>
<name>CARB_RUBXD</name>
<gene>
    <name evidence="1" type="primary">carB</name>
    <name type="ordered locus">Rxyl_1477</name>
</gene>
<feature type="chain" id="PRO_1000066377" description="Carbamoyl phosphate synthase large chain">
    <location>
        <begin position="1"/>
        <end position="1054"/>
    </location>
</feature>
<feature type="domain" description="ATP-grasp 1" evidence="1">
    <location>
        <begin position="133"/>
        <end position="328"/>
    </location>
</feature>
<feature type="domain" description="ATP-grasp 2" evidence="1">
    <location>
        <begin position="658"/>
        <end position="849"/>
    </location>
</feature>
<feature type="domain" description="MGS-like" evidence="1">
    <location>
        <begin position="915"/>
        <end position="1054"/>
    </location>
</feature>
<feature type="region of interest" description="Carboxyphosphate synthetic domain" evidence="1">
    <location>
        <begin position="1"/>
        <end position="402"/>
    </location>
</feature>
<feature type="region of interest" description="Oligomerization domain" evidence="1">
    <location>
        <begin position="403"/>
        <end position="531"/>
    </location>
</feature>
<feature type="region of interest" description="Carbamoyl phosphate synthetic domain" evidence="1">
    <location>
        <begin position="532"/>
        <end position="914"/>
    </location>
</feature>
<feature type="region of interest" description="Allosteric domain" evidence="1">
    <location>
        <begin position="915"/>
        <end position="1054"/>
    </location>
</feature>
<feature type="binding site" evidence="1">
    <location>
        <position position="129"/>
    </location>
    <ligand>
        <name>ATP</name>
        <dbReference type="ChEBI" id="CHEBI:30616"/>
        <label>1</label>
    </ligand>
</feature>
<feature type="binding site" evidence="1">
    <location>
        <position position="169"/>
    </location>
    <ligand>
        <name>ATP</name>
        <dbReference type="ChEBI" id="CHEBI:30616"/>
        <label>1</label>
    </ligand>
</feature>
<feature type="binding site" evidence="1">
    <location>
        <position position="175"/>
    </location>
    <ligand>
        <name>ATP</name>
        <dbReference type="ChEBI" id="CHEBI:30616"/>
        <label>1</label>
    </ligand>
</feature>
<feature type="binding site" evidence="1">
    <location>
        <position position="176"/>
    </location>
    <ligand>
        <name>ATP</name>
        <dbReference type="ChEBI" id="CHEBI:30616"/>
        <label>1</label>
    </ligand>
</feature>
<feature type="binding site" evidence="1">
    <location>
        <position position="208"/>
    </location>
    <ligand>
        <name>ATP</name>
        <dbReference type="ChEBI" id="CHEBI:30616"/>
        <label>1</label>
    </ligand>
</feature>
<feature type="binding site" evidence="1">
    <location>
        <position position="210"/>
    </location>
    <ligand>
        <name>ATP</name>
        <dbReference type="ChEBI" id="CHEBI:30616"/>
        <label>1</label>
    </ligand>
</feature>
<feature type="binding site" evidence="1">
    <location>
        <position position="215"/>
    </location>
    <ligand>
        <name>ATP</name>
        <dbReference type="ChEBI" id="CHEBI:30616"/>
        <label>1</label>
    </ligand>
</feature>
<feature type="binding site" evidence="1">
    <location>
        <position position="241"/>
    </location>
    <ligand>
        <name>ATP</name>
        <dbReference type="ChEBI" id="CHEBI:30616"/>
        <label>1</label>
    </ligand>
</feature>
<feature type="binding site" evidence="1">
    <location>
        <position position="242"/>
    </location>
    <ligand>
        <name>ATP</name>
        <dbReference type="ChEBI" id="CHEBI:30616"/>
        <label>1</label>
    </ligand>
</feature>
<feature type="binding site" evidence="1">
    <location>
        <position position="243"/>
    </location>
    <ligand>
        <name>ATP</name>
        <dbReference type="ChEBI" id="CHEBI:30616"/>
        <label>1</label>
    </ligand>
</feature>
<feature type="binding site" evidence="1">
    <location>
        <position position="285"/>
    </location>
    <ligand>
        <name>ATP</name>
        <dbReference type="ChEBI" id="CHEBI:30616"/>
        <label>1</label>
    </ligand>
</feature>
<feature type="binding site" evidence="1">
    <location>
        <position position="285"/>
    </location>
    <ligand>
        <name>Mg(2+)</name>
        <dbReference type="ChEBI" id="CHEBI:18420"/>
        <label>1</label>
    </ligand>
</feature>
<feature type="binding site" evidence="1">
    <location>
        <position position="285"/>
    </location>
    <ligand>
        <name>Mn(2+)</name>
        <dbReference type="ChEBI" id="CHEBI:29035"/>
        <label>1</label>
    </ligand>
</feature>
<feature type="binding site" evidence="1">
    <location>
        <position position="299"/>
    </location>
    <ligand>
        <name>ATP</name>
        <dbReference type="ChEBI" id="CHEBI:30616"/>
        <label>1</label>
    </ligand>
</feature>
<feature type="binding site" evidence="1">
    <location>
        <position position="299"/>
    </location>
    <ligand>
        <name>Mg(2+)</name>
        <dbReference type="ChEBI" id="CHEBI:18420"/>
        <label>1</label>
    </ligand>
</feature>
<feature type="binding site" evidence="1">
    <location>
        <position position="299"/>
    </location>
    <ligand>
        <name>Mg(2+)</name>
        <dbReference type="ChEBI" id="CHEBI:18420"/>
        <label>2</label>
    </ligand>
</feature>
<feature type="binding site" evidence="1">
    <location>
        <position position="299"/>
    </location>
    <ligand>
        <name>Mn(2+)</name>
        <dbReference type="ChEBI" id="CHEBI:29035"/>
        <label>1</label>
    </ligand>
</feature>
<feature type="binding site" evidence="1">
    <location>
        <position position="299"/>
    </location>
    <ligand>
        <name>Mn(2+)</name>
        <dbReference type="ChEBI" id="CHEBI:29035"/>
        <label>2</label>
    </ligand>
</feature>
<feature type="binding site" evidence="1">
    <location>
        <position position="301"/>
    </location>
    <ligand>
        <name>Mg(2+)</name>
        <dbReference type="ChEBI" id="CHEBI:18420"/>
        <label>2</label>
    </ligand>
</feature>
<feature type="binding site" evidence="1">
    <location>
        <position position="301"/>
    </location>
    <ligand>
        <name>Mn(2+)</name>
        <dbReference type="ChEBI" id="CHEBI:29035"/>
        <label>2</label>
    </ligand>
</feature>
<feature type="binding site" evidence="1">
    <location>
        <position position="694"/>
    </location>
    <ligand>
        <name>ATP</name>
        <dbReference type="ChEBI" id="CHEBI:30616"/>
        <label>2</label>
    </ligand>
</feature>
<feature type="binding site" evidence="1">
    <location>
        <position position="733"/>
    </location>
    <ligand>
        <name>ATP</name>
        <dbReference type="ChEBI" id="CHEBI:30616"/>
        <label>2</label>
    </ligand>
</feature>
<feature type="binding site" evidence="1">
    <location>
        <position position="740"/>
    </location>
    <ligand>
        <name>ATP</name>
        <dbReference type="ChEBI" id="CHEBI:30616"/>
        <label>2</label>
    </ligand>
</feature>
<feature type="binding site" evidence="1">
    <location>
        <position position="765"/>
    </location>
    <ligand>
        <name>ATP</name>
        <dbReference type="ChEBI" id="CHEBI:30616"/>
        <label>2</label>
    </ligand>
</feature>
<feature type="binding site" evidence="1">
    <location>
        <position position="766"/>
    </location>
    <ligand>
        <name>ATP</name>
        <dbReference type="ChEBI" id="CHEBI:30616"/>
        <label>2</label>
    </ligand>
</feature>
<feature type="binding site" evidence="1">
    <location>
        <position position="767"/>
    </location>
    <ligand>
        <name>ATP</name>
        <dbReference type="ChEBI" id="CHEBI:30616"/>
        <label>2</label>
    </ligand>
</feature>
<feature type="binding site" evidence="1">
    <location>
        <position position="768"/>
    </location>
    <ligand>
        <name>ATP</name>
        <dbReference type="ChEBI" id="CHEBI:30616"/>
        <label>2</label>
    </ligand>
</feature>
<feature type="binding site" evidence="1">
    <location>
        <position position="808"/>
    </location>
    <ligand>
        <name>ATP</name>
        <dbReference type="ChEBI" id="CHEBI:30616"/>
        <label>2</label>
    </ligand>
</feature>
<feature type="binding site" evidence="1">
    <location>
        <position position="808"/>
    </location>
    <ligand>
        <name>Mg(2+)</name>
        <dbReference type="ChEBI" id="CHEBI:18420"/>
        <label>3</label>
    </ligand>
</feature>
<feature type="binding site" evidence="1">
    <location>
        <position position="808"/>
    </location>
    <ligand>
        <name>Mn(2+)</name>
        <dbReference type="ChEBI" id="CHEBI:29035"/>
        <label>3</label>
    </ligand>
</feature>
<feature type="binding site" evidence="1">
    <location>
        <position position="820"/>
    </location>
    <ligand>
        <name>ATP</name>
        <dbReference type="ChEBI" id="CHEBI:30616"/>
        <label>2</label>
    </ligand>
</feature>
<feature type="binding site" evidence="1">
    <location>
        <position position="820"/>
    </location>
    <ligand>
        <name>Mg(2+)</name>
        <dbReference type="ChEBI" id="CHEBI:18420"/>
        <label>3</label>
    </ligand>
</feature>
<feature type="binding site" evidence="1">
    <location>
        <position position="820"/>
    </location>
    <ligand>
        <name>Mg(2+)</name>
        <dbReference type="ChEBI" id="CHEBI:18420"/>
        <label>4</label>
    </ligand>
</feature>
<feature type="binding site" evidence="1">
    <location>
        <position position="820"/>
    </location>
    <ligand>
        <name>Mn(2+)</name>
        <dbReference type="ChEBI" id="CHEBI:29035"/>
        <label>3</label>
    </ligand>
</feature>
<feature type="binding site" evidence="1">
    <location>
        <position position="820"/>
    </location>
    <ligand>
        <name>Mn(2+)</name>
        <dbReference type="ChEBI" id="CHEBI:29035"/>
        <label>4</label>
    </ligand>
</feature>
<feature type="binding site" evidence="1">
    <location>
        <position position="822"/>
    </location>
    <ligand>
        <name>Mg(2+)</name>
        <dbReference type="ChEBI" id="CHEBI:18420"/>
        <label>4</label>
    </ligand>
</feature>
<feature type="binding site" evidence="1">
    <location>
        <position position="822"/>
    </location>
    <ligand>
        <name>Mn(2+)</name>
        <dbReference type="ChEBI" id="CHEBI:29035"/>
        <label>4</label>
    </ligand>
</feature>
<sequence length="1054" mass="114386">MPRRDDIRSILIIGSGPIVIGQAAEFDYSGTQACRALKEEGYRVILVNSNPATIMTDPEMADTTYIEPLRAETVAEVIRRERPDALLPTLGGQTALNLAVELSEAGVLEEYGVQLLGASIPSIQKAEDRQLFREAMERIGLRVPESRTVRSVPEAEELAERIGFPLIIRPSFTLGGTGGSVAEDLDALRASVRDGLDASPVRSVLVERSVAGWKEFELEVMRDLADNVVIVCSIENVDPMGVHTGDSITVAPAQTLSDRQYQSLRTAAIRIIREIGVSTGGSNIQFAVNPEGDDFYVIEMNPRVSRSSALASKATGFPIAKIAARLAVGYTLDEITNDITGATPASFEPALDYVVTKIPRFAFEKFPGTSARLTTRMHSVGEVMAIGRTFTESLLKAMASLEIETRDIQARLDEPSPYRIFAVFEALRAGMDIPEIYRRTSIDPFFIAAAARIVAAEGAVEETLSAEQVRELKRMGFTDEALAACSGYPAEVVRGVRRALGVHPTYKAVDTCAGEFPARTPYYYSTYEQEDEVERGENPSVVVLGSGPNRIGQGIEFDYACVHASYELKACGYDAVMINSNPETVSTDYDTSSRLYFEPLTAEHVLEVVRRERPEGVILQFGGQSPLKLARELERAGARVLGTSPEAIDLAEDRSRFGRLLRELGIPHPRFGTATTAAEAREVARRLGYPVVVRPSYVLGGRRMEIVYGDEDLELYLRSSVSGSPEHPILVDKFMEAYVEVDVDAVSDGEEVYIGGIMEHIEEAGVHSGDSSCVTPPITLTRSLQERIEDYTRRLALSIGVVGLMNVQYVVRGDEVMAIECNPRASRTVPYISKATGVPLARLATRVLLGEKLRDLGPRPASSGSFAVKAPVFPFDRFAEVDPLLGPEMRSTGEAMGIDPTFGGAFAKALAAAGQRLPESGRVYVSVADRDKRAAVLIARGFADLGFEVLASEGTAGVLRNNGLPAAVVPKIGEGGEDVLGLIERGGVDLIVNTPWGRGSRTDGYLIRRKALMHRVPCITTLAGAAAALQGIEARIRGETRRVHSLQDLYAART</sequence>
<evidence type="ECO:0000255" key="1">
    <source>
        <dbReference type="HAMAP-Rule" id="MF_01210"/>
    </source>
</evidence>
<dbReference type="EC" id="6.3.4.16" evidence="1"/>
<dbReference type="EC" id="6.3.5.5" evidence="1"/>
<dbReference type="EMBL" id="CP000386">
    <property type="protein sequence ID" value="ABG04439.1"/>
    <property type="molecule type" value="Genomic_DNA"/>
</dbReference>
<dbReference type="RefSeq" id="WP_011564456.1">
    <property type="nucleotide sequence ID" value="NC_008148.1"/>
</dbReference>
<dbReference type="SMR" id="Q1AVY9"/>
<dbReference type="STRING" id="266117.Rxyl_1477"/>
<dbReference type="KEGG" id="rxy:Rxyl_1477"/>
<dbReference type="eggNOG" id="COG0458">
    <property type="taxonomic scope" value="Bacteria"/>
</dbReference>
<dbReference type="HOGENOM" id="CLU_000513_1_3_11"/>
<dbReference type="OrthoDB" id="9804197at2"/>
<dbReference type="PhylomeDB" id="Q1AVY9"/>
<dbReference type="UniPathway" id="UPA00068">
    <property type="reaction ID" value="UER00171"/>
</dbReference>
<dbReference type="UniPathway" id="UPA00070">
    <property type="reaction ID" value="UER00115"/>
</dbReference>
<dbReference type="Proteomes" id="UP000006637">
    <property type="component" value="Chromosome"/>
</dbReference>
<dbReference type="GO" id="GO:0005737">
    <property type="term" value="C:cytoplasm"/>
    <property type="evidence" value="ECO:0007669"/>
    <property type="project" value="TreeGrafter"/>
</dbReference>
<dbReference type="GO" id="GO:0005524">
    <property type="term" value="F:ATP binding"/>
    <property type="evidence" value="ECO:0007669"/>
    <property type="project" value="UniProtKB-UniRule"/>
</dbReference>
<dbReference type="GO" id="GO:0004087">
    <property type="term" value="F:carbamoyl-phosphate synthase (ammonia) activity"/>
    <property type="evidence" value="ECO:0007669"/>
    <property type="project" value="RHEA"/>
</dbReference>
<dbReference type="GO" id="GO:0004088">
    <property type="term" value="F:carbamoyl-phosphate synthase (glutamine-hydrolyzing) activity"/>
    <property type="evidence" value="ECO:0007669"/>
    <property type="project" value="UniProtKB-UniRule"/>
</dbReference>
<dbReference type="GO" id="GO:0046872">
    <property type="term" value="F:metal ion binding"/>
    <property type="evidence" value="ECO:0007669"/>
    <property type="project" value="UniProtKB-KW"/>
</dbReference>
<dbReference type="GO" id="GO:0044205">
    <property type="term" value="P:'de novo' UMP biosynthetic process"/>
    <property type="evidence" value="ECO:0007669"/>
    <property type="project" value="UniProtKB-UniRule"/>
</dbReference>
<dbReference type="GO" id="GO:0006541">
    <property type="term" value="P:glutamine metabolic process"/>
    <property type="evidence" value="ECO:0007669"/>
    <property type="project" value="TreeGrafter"/>
</dbReference>
<dbReference type="GO" id="GO:0006526">
    <property type="term" value="P:L-arginine biosynthetic process"/>
    <property type="evidence" value="ECO:0007669"/>
    <property type="project" value="UniProtKB-UniRule"/>
</dbReference>
<dbReference type="CDD" id="cd01424">
    <property type="entry name" value="MGS_CPS_II"/>
    <property type="match status" value="1"/>
</dbReference>
<dbReference type="FunFam" id="1.10.1030.10:FF:000002">
    <property type="entry name" value="Carbamoyl-phosphate synthase large chain"/>
    <property type="match status" value="1"/>
</dbReference>
<dbReference type="FunFam" id="3.30.1490.20:FF:000001">
    <property type="entry name" value="Carbamoyl-phosphate synthase large chain"/>
    <property type="match status" value="1"/>
</dbReference>
<dbReference type="FunFam" id="3.30.470.20:FF:000007">
    <property type="entry name" value="Carbamoyl-phosphate synthase large chain"/>
    <property type="match status" value="1"/>
</dbReference>
<dbReference type="FunFam" id="3.30.470.20:FF:000026">
    <property type="entry name" value="Carbamoyl-phosphate synthase large chain"/>
    <property type="match status" value="1"/>
</dbReference>
<dbReference type="FunFam" id="3.40.50.20:FF:000001">
    <property type="entry name" value="Carbamoyl-phosphate synthase large chain"/>
    <property type="match status" value="1"/>
</dbReference>
<dbReference type="FunFam" id="3.40.50.20:FF:000002">
    <property type="entry name" value="Carbamoyl-phosphate synthase large chain"/>
    <property type="match status" value="1"/>
</dbReference>
<dbReference type="Gene3D" id="3.40.50.20">
    <property type="match status" value="2"/>
</dbReference>
<dbReference type="Gene3D" id="3.30.1490.20">
    <property type="entry name" value="ATP-grasp fold, A domain"/>
    <property type="match status" value="1"/>
</dbReference>
<dbReference type="Gene3D" id="3.30.470.20">
    <property type="entry name" value="ATP-grasp fold, B domain"/>
    <property type="match status" value="2"/>
</dbReference>
<dbReference type="Gene3D" id="1.10.1030.10">
    <property type="entry name" value="Carbamoyl-phosphate synthetase, large subunit oligomerisation domain"/>
    <property type="match status" value="1"/>
</dbReference>
<dbReference type="Gene3D" id="3.40.50.1380">
    <property type="entry name" value="Methylglyoxal synthase-like domain"/>
    <property type="match status" value="1"/>
</dbReference>
<dbReference type="HAMAP" id="MF_01210_A">
    <property type="entry name" value="CPSase_L_chain_A"/>
    <property type="match status" value="1"/>
</dbReference>
<dbReference type="HAMAP" id="MF_01210_B">
    <property type="entry name" value="CPSase_L_chain_B"/>
    <property type="match status" value="1"/>
</dbReference>
<dbReference type="InterPro" id="IPR011761">
    <property type="entry name" value="ATP-grasp"/>
</dbReference>
<dbReference type="InterPro" id="IPR013815">
    <property type="entry name" value="ATP_grasp_subdomain_1"/>
</dbReference>
<dbReference type="InterPro" id="IPR006275">
    <property type="entry name" value="CarbamoylP_synth_lsu"/>
</dbReference>
<dbReference type="InterPro" id="IPR005480">
    <property type="entry name" value="CarbamoylP_synth_lsu_oligo"/>
</dbReference>
<dbReference type="InterPro" id="IPR036897">
    <property type="entry name" value="CarbamoylP_synth_lsu_oligo_sf"/>
</dbReference>
<dbReference type="InterPro" id="IPR005479">
    <property type="entry name" value="CbamoylP_synth_lsu-like_ATP-bd"/>
</dbReference>
<dbReference type="InterPro" id="IPR005483">
    <property type="entry name" value="CbamoylP_synth_lsu_CPSase_dom"/>
</dbReference>
<dbReference type="InterPro" id="IPR011607">
    <property type="entry name" value="MGS-like_dom"/>
</dbReference>
<dbReference type="InterPro" id="IPR036914">
    <property type="entry name" value="MGS-like_dom_sf"/>
</dbReference>
<dbReference type="InterPro" id="IPR033937">
    <property type="entry name" value="MGS_CPS_CarB"/>
</dbReference>
<dbReference type="InterPro" id="IPR016185">
    <property type="entry name" value="PreATP-grasp_dom_sf"/>
</dbReference>
<dbReference type="NCBIfam" id="TIGR01369">
    <property type="entry name" value="CPSaseII_lrg"/>
    <property type="match status" value="1"/>
</dbReference>
<dbReference type="NCBIfam" id="NF003671">
    <property type="entry name" value="PRK05294.1"/>
    <property type="match status" value="1"/>
</dbReference>
<dbReference type="NCBIfam" id="NF009455">
    <property type="entry name" value="PRK12815.1"/>
    <property type="match status" value="1"/>
</dbReference>
<dbReference type="PANTHER" id="PTHR11405:SF53">
    <property type="entry name" value="CARBAMOYL-PHOSPHATE SYNTHASE [AMMONIA], MITOCHONDRIAL"/>
    <property type="match status" value="1"/>
</dbReference>
<dbReference type="PANTHER" id="PTHR11405">
    <property type="entry name" value="CARBAMOYLTRANSFERASE FAMILY MEMBER"/>
    <property type="match status" value="1"/>
</dbReference>
<dbReference type="Pfam" id="PF02786">
    <property type="entry name" value="CPSase_L_D2"/>
    <property type="match status" value="2"/>
</dbReference>
<dbReference type="Pfam" id="PF02787">
    <property type="entry name" value="CPSase_L_D3"/>
    <property type="match status" value="1"/>
</dbReference>
<dbReference type="Pfam" id="PF02142">
    <property type="entry name" value="MGS"/>
    <property type="match status" value="1"/>
</dbReference>
<dbReference type="PRINTS" id="PR00098">
    <property type="entry name" value="CPSASE"/>
</dbReference>
<dbReference type="SMART" id="SM01096">
    <property type="entry name" value="CPSase_L_D3"/>
    <property type="match status" value="1"/>
</dbReference>
<dbReference type="SMART" id="SM00851">
    <property type="entry name" value="MGS"/>
    <property type="match status" value="1"/>
</dbReference>
<dbReference type="SUPFAM" id="SSF48108">
    <property type="entry name" value="Carbamoyl phosphate synthetase, large subunit connection domain"/>
    <property type="match status" value="1"/>
</dbReference>
<dbReference type="SUPFAM" id="SSF56059">
    <property type="entry name" value="Glutathione synthetase ATP-binding domain-like"/>
    <property type="match status" value="2"/>
</dbReference>
<dbReference type="SUPFAM" id="SSF52335">
    <property type="entry name" value="Methylglyoxal synthase-like"/>
    <property type="match status" value="1"/>
</dbReference>
<dbReference type="SUPFAM" id="SSF52440">
    <property type="entry name" value="PreATP-grasp domain"/>
    <property type="match status" value="2"/>
</dbReference>
<dbReference type="PROSITE" id="PS50975">
    <property type="entry name" value="ATP_GRASP"/>
    <property type="match status" value="2"/>
</dbReference>
<dbReference type="PROSITE" id="PS00866">
    <property type="entry name" value="CPSASE_1"/>
    <property type="match status" value="1"/>
</dbReference>
<dbReference type="PROSITE" id="PS00867">
    <property type="entry name" value="CPSASE_2"/>
    <property type="match status" value="1"/>
</dbReference>
<dbReference type="PROSITE" id="PS51855">
    <property type="entry name" value="MGS"/>
    <property type="match status" value="1"/>
</dbReference>
<protein>
    <recommendedName>
        <fullName evidence="1">Carbamoyl phosphate synthase large chain</fullName>
        <ecNumber evidence="1">6.3.4.16</ecNumber>
        <ecNumber evidence="1">6.3.5.5</ecNumber>
    </recommendedName>
    <alternativeName>
        <fullName evidence="1">Carbamoyl phosphate synthetase ammonia chain</fullName>
    </alternativeName>
</protein>
<accession>Q1AVY9</accession>
<comment type="function">
    <text evidence="1">Large subunit of the glutamine-dependent carbamoyl phosphate synthetase (CPSase). CPSase catalyzes the formation of carbamoyl phosphate from the ammonia moiety of glutamine, carbonate, and phosphate donated by ATP, constituting the first step of 2 biosynthetic pathways, one leading to arginine and/or urea and the other to pyrimidine nucleotides. The large subunit (synthetase) binds the substrates ammonia (free or transferred from glutamine from the small subunit), hydrogencarbonate and ATP and carries out an ATP-coupled ligase reaction, activating hydrogencarbonate by forming carboxy phosphate which reacts with ammonia to form carbamoyl phosphate.</text>
</comment>
<comment type="catalytic activity">
    <reaction evidence="1">
        <text>hydrogencarbonate + L-glutamine + 2 ATP + H2O = carbamoyl phosphate + L-glutamate + 2 ADP + phosphate + 2 H(+)</text>
        <dbReference type="Rhea" id="RHEA:18633"/>
        <dbReference type="ChEBI" id="CHEBI:15377"/>
        <dbReference type="ChEBI" id="CHEBI:15378"/>
        <dbReference type="ChEBI" id="CHEBI:17544"/>
        <dbReference type="ChEBI" id="CHEBI:29985"/>
        <dbReference type="ChEBI" id="CHEBI:30616"/>
        <dbReference type="ChEBI" id="CHEBI:43474"/>
        <dbReference type="ChEBI" id="CHEBI:58228"/>
        <dbReference type="ChEBI" id="CHEBI:58359"/>
        <dbReference type="ChEBI" id="CHEBI:456216"/>
        <dbReference type="EC" id="6.3.5.5"/>
    </reaction>
</comment>
<comment type="catalytic activity">
    <molecule>Carbamoyl phosphate synthase large chain</molecule>
    <reaction evidence="1">
        <text>hydrogencarbonate + NH4(+) + 2 ATP = carbamoyl phosphate + 2 ADP + phosphate + 2 H(+)</text>
        <dbReference type="Rhea" id="RHEA:18029"/>
        <dbReference type="ChEBI" id="CHEBI:15378"/>
        <dbReference type="ChEBI" id="CHEBI:17544"/>
        <dbReference type="ChEBI" id="CHEBI:28938"/>
        <dbReference type="ChEBI" id="CHEBI:30616"/>
        <dbReference type="ChEBI" id="CHEBI:43474"/>
        <dbReference type="ChEBI" id="CHEBI:58228"/>
        <dbReference type="ChEBI" id="CHEBI:456216"/>
        <dbReference type="EC" id="6.3.4.16"/>
    </reaction>
</comment>
<comment type="cofactor">
    <cofactor evidence="1">
        <name>Mg(2+)</name>
        <dbReference type="ChEBI" id="CHEBI:18420"/>
    </cofactor>
    <cofactor evidence="1">
        <name>Mn(2+)</name>
        <dbReference type="ChEBI" id="CHEBI:29035"/>
    </cofactor>
    <text evidence="1">Binds 4 Mg(2+) or Mn(2+) ions per subunit.</text>
</comment>
<comment type="pathway">
    <text evidence="1">Amino-acid biosynthesis; L-arginine biosynthesis; carbamoyl phosphate from bicarbonate: step 1/1.</text>
</comment>
<comment type="pathway">
    <text evidence="1">Pyrimidine metabolism; UMP biosynthesis via de novo pathway; (S)-dihydroorotate from bicarbonate: step 1/3.</text>
</comment>
<comment type="subunit">
    <text evidence="1">Composed of two chains; the small (or glutamine) chain promotes the hydrolysis of glutamine to ammonia, which is used by the large (or ammonia) chain to synthesize carbamoyl phosphate. Tetramer of heterodimers (alpha,beta)4.</text>
</comment>
<comment type="domain">
    <text evidence="1">The large subunit is composed of 2 ATP-grasp domains that are involved in binding the 2 ATP molecules needed for carbamoyl phosphate synthesis. The N-terminal ATP-grasp domain (referred to as the carboxyphosphate synthetic component) catalyzes the ATP-dependent phosphorylation of hydrogencarbonate to carboxyphosphate and the subsequent nucleophilic attack by ammonia to form a carbamate intermediate. The C-terminal ATP-grasp domain (referred to as the carbamoyl phosphate synthetic component) then catalyzes the phosphorylation of carbamate with the second ATP to form the end product carbamoyl phosphate. The reactive and unstable enzyme intermediates are sequentially channeled from one active site to the next through the interior of the protein over a distance of at least 96 A.</text>
</comment>
<comment type="similarity">
    <text evidence="1">Belongs to the CarB family.</text>
</comment>
<proteinExistence type="inferred from homology"/>